<reference key="1">
    <citation type="journal article" date="2009" name="BMC Genomics">
        <title>Conservation in the face of diversity: multistrain analysis of an intracellular bacterium.</title>
        <authorList>
            <person name="Dark M.J."/>
            <person name="Herndon D.R."/>
            <person name="Kappmeyer L.S."/>
            <person name="Gonzales M.P."/>
            <person name="Nordeen E."/>
            <person name="Palmer G.H."/>
            <person name="Knowles D.P. Jr."/>
            <person name="Brayton K.A."/>
        </authorList>
    </citation>
    <scope>NUCLEOTIDE SEQUENCE [LARGE SCALE GENOMIC DNA]</scope>
    <source>
        <strain>Florida</strain>
    </source>
</reference>
<name>PNP_ANAMF</name>
<keyword id="KW-0963">Cytoplasm</keyword>
<keyword id="KW-0460">Magnesium</keyword>
<keyword id="KW-0479">Metal-binding</keyword>
<keyword id="KW-0548">Nucleotidyltransferase</keyword>
<keyword id="KW-1185">Reference proteome</keyword>
<keyword id="KW-0694">RNA-binding</keyword>
<keyword id="KW-0808">Transferase</keyword>
<proteinExistence type="inferred from homology"/>
<gene>
    <name evidence="1" type="primary">pnp</name>
    <name type="ordered locus">AMF_391</name>
</gene>
<evidence type="ECO:0000255" key="1">
    <source>
        <dbReference type="HAMAP-Rule" id="MF_01595"/>
    </source>
</evidence>
<evidence type="ECO:0000256" key="2">
    <source>
        <dbReference type="SAM" id="MobiDB-lite"/>
    </source>
</evidence>
<comment type="function">
    <text evidence="1">Involved in mRNA degradation. Catalyzes the phosphorolysis of single-stranded polyribonucleotides processively in the 3'- to 5'-direction.</text>
</comment>
<comment type="catalytic activity">
    <reaction evidence="1">
        <text>RNA(n+1) + phosphate = RNA(n) + a ribonucleoside 5'-diphosphate</text>
        <dbReference type="Rhea" id="RHEA:22096"/>
        <dbReference type="Rhea" id="RHEA-COMP:14527"/>
        <dbReference type="Rhea" id="RHEA-COMP:17342"/>
        <dbReference type="ChEBI" id="CHEBI:43474"/>
        <dbReference type="ChEBI" id="CHEBI:57930"/>
        <dbReference type="ChEBI" id="CHEBI:140395"/>
        <dbReference type="EC" id="2.7.7.8"/>
    </reaction>
</comment>
<comment type="cofactor">
    <cofactor evidence="1">
        <name>Mg(2+)</name>
        <dbReference type="ChEBI" id="CHEBI:18420"/>
    </cofactor>
</comment>
<comment type="subcellular location">
    <subcellularLocation>
        <location evidence="1">Cytoplasm</location>
    </subcellularLocation>
</comment>
<comment type="similarity">
    <text evidence="1">Belongs to the polyribonucleotide nucleotidyltransferase family.</text>
</comment>
<dbReference type="EC" id="2.7.7.8" evidence="1"/>
<dbReference type="EMBL" id="CP001079">
    <property type="protein sequence ID" value="ACM49255.1"/>
    <property type="molecule type" value="Genomic_DNA"/>
</dbReference>
<dbReference type="RefSeq" id="WP_012658930.1">
    <property type="nucleotide sequence ID" value="NC_012026.1"/>
</dbReference>
<dbReference type="SMR" id="B9KIE3"/>
<dbReference type="STRING" id="320483.AMF_391"/>
<dbReference type="GeneID" id="7397935"/>
<dbReference type="KEGG" id="amf:AMF_391"/>
<dbReference type="PATRIC" id="fig|320483.3.peg.455"/>
<dbReference type="eggNOG" id="COG1185">
    <property type="taxonomic scope" value="Bacteria"/>
</dbReference>
<dbReference type="HOGENOM" id="CLU_004217_2_2_5"/>
<dbReference type="Proteomes" id="UP000007307">
    <property type="component" value="Chromosome"/>
</dbReference>
<dbReference type="GO" id="GO:0005829">
    <property type="term" value="C:cytosol"/>
    <property type="evidence" value="ECO:0007669"/>
    <property type="project" value="TreeGrafter"/>
</dbReference>
<dbReference type="GO" id="GO:0000175">
    <property type="term" value="F:3'-5'-RNA exonuclease activity"/>
    <property type="evidence" value="ECO:0007669"/>
    <property type="project" value="TreeGrafter"/>
</dbReference>
<dbReference type="GO" id="GO:0000287">
    <property type="term" value="F:magnesium ion binding"/>
    <property type="evidence" value="ECO:0007669"/>
    <property type="project" value="UniProtKB-UniRule"/>
</dbReference>
<dbReference type="GO" id="GO:0004654">
    <property type="term" value="F:polyribonucleotide nucleotidyltransferase activity"/>
    <property type="evidence" value="ECO:0007669"/>
    <property type="project" value="UniProtKB-UniRule"/>
</dbReference>
<dbReference type="GO" id="GO:0003723">
    <property type="term" value="F:RNA binding"/>
    <property type="evidence" value="ECO:0007669"/>
    <property type="project" value="UniProtKB-UniRule"/>
</dbReference>
<dbReference type="GO" id="GO:0006402">
    <property type="term" value="P:mRNA catabolic process"/>
    <property type="evidence" value="ECO:0007669"/>
    <property type="project" value="UniProtKB-UniRule"/>
</dbReference>
<dbReference type="CDD" id="cd02393">
    <property type="entry name" value="KH-I_PNPase"/>
    <property type="match status" value="1"/>
</dbReference>
<dbReference type="CDD" id="cd11364">
    <property type="entry name" value="RNase_PH_PNPase_2"/>
    <property type="match status" value="1"/>
</dbReference>
<dbReference type="FunFam" id="3.30.1370.10:FF:000001">
    <property type="entry name" value="Polyribonucleotide nucleotidyltransferase"/>
    <property type="match status" value="1"/>
</dbReference>
<dbReference type="FunFam" id="3.30.230.70:FF:000001">
    <property type="entry name" value="Polyribonucleotide nucleotidyltransferase"/>
    <property type="match status" value="1"/>
</dbReference>
<dbReference type="FunFam" id="3.30.230.70:FF:000002">
    <property type="entry name" value="Polyribonucleotide nucleotidyltransferase"/>
    <property type="match status" value="1"/>
</dbReference>
<dbReference type="Gene3D" id="3.30.230.70">
    <property type="entry name" value="GHMP Kinase, N-terminal domain"/>
    <property type="match status" value="2"/>
</dbReference>
<dbReference type="Gene3D" id="3.30.1370.10">
    <property type="entry name" value="K Homology domain, type 1"/>
    <property type="match status" value="1"/>
</dbReference>
<dbReference type="Gene3D" id="2.40.50.140">
    <property type="entry name" value="Nucleic acid-binding proteins"/>
    <property type="match status" value="1"/>
</dbReference>
<dbReference type="HAMAP" id="MF_01595">
    <property type="entry name" value="PNPase"/>
    <property type="match status" value="1"/>
</dbReference>
<dbReference type="InterPro" id="IPR001247">
    <property type="entry name" value="ExoRNase_PH_dom1"/>
</dbReference>
<dbReference type="InterPro" id="IPR015847">
    <property type="entry name" value="ExoRNase_PH_dom2"/>
</dbReference>
<dbReference type="InterPro" id="IPR036345">
    <property type="entry name" value="ExoRNase_PH_dom2_sf"/>
</dbReference>
<dbReference type="InterPro" id="IPR004087">
    <property type="entry name" value="KH_dom"/>
</dbReference>
<dbReference type="InterPro" id="IPR004088">
    <property type="entry name" value="KH_dom_type_1"/>
</dbReference>
<dbReference type="InterPro" id="IPR036612">
    <property type="entry name" value="KH_dom_type_1_sf"/>
</dbReference>
<dbReference type="InterPro" id="IPR012340">
    <property type="entry name" value="NA-bd_OB-fold"/>
</dbReference>
<dbReference type="InterPro" id="IPR012162">
    <property type="entry name" value="PNPase"/>
</dbReference>
<dbReference type="InterPro" id="IPR027408">
    <property type="entry name" value="PNPase/RNase_PH_dom_sf"/>
</dbReference>
<dbReference type="InterPro" id="IPR020568">
    <property type="entry name" value="Ribosomal_Su5_D2-typ_SF"/>
</dbReference>
<dbReference type="InterPro" id="IPR003029">
    <property type="entry name" value="S1_domain"/>
</dbReference>
<dbReference type="NCBIfam" id="TIGR03591">
    <property type="entry name" value="polynuc_phos"/>
    <property type="match status" value="1"/>
</dbReference>
<dbReference type="NCBIfam" id="NF008805">
    <property type="entry name" value="PRK11824.1"/>
    <property type="match status" value="1"/>
</dbReference>
<dbReference type="PANTHER" id="PTHR11252">
    <property type="entry name" value="POLYRIBONUCLEOTIDE NUCLEOTIDYLTRANSFERASE"/>
    <property type="match status" value="1"/>
</dbReference>
<dbReference type="PANTHER" id="PTHR11252:SF0">
    <property type="entry name" value="POLYRIBONUCLEOTIDE NUCLEOTIDYLTRANSFERASE 1, MITOCHONDRIAL"/>
    <property type="match status" value="1"/>
</dbReference>
<dbReference type="Pfam" id="PF00013">
    <property type="entry name" value="KH_1"/>
    <property type="match status" value="1"/>
</dbReference>
<dbReference type="Pfam" id="PF01138">
    <property type="entry name" value="RNase_PH"/>
    <property type="match status" value="2"/>
</dbReference>
<dbReference type="Pfam" id="PF03725">
    <property type="entry name" value="RNase_PH_C"/>
    <property type="match status" value="1"/>
</dbReference>
<dbReference type="Pfam" id="PF00575">
    <property type="entry name" value="S1"/>
    <property type="match status" value="1"/>
</dbReference>
<dbReference type="PIRSF" id="PIRSF005499">
    <property type="entry name" value="PNPase"/>
    <property type="match status" value="1"/>
</dbReference>
<dbReference type="SMART" id="SM00322">
    <property type="entry name" value="KH"/>
    <property type="match status" value="1"/>
</dbReference>
<dbReference type="SMART" id="SM00316">
    <property type="entry name" value="S1"/>
    <property type="match status" value="1"/>
</dbReference>
<dbReference type="SUPFAM" id="SSF54791">
    <property type="entry name" value="Eukaryotic type KH-domain (KH-domain type I)"/>
    <property type="match status" value="1"/>
</dbReference>
<dbReference type="SUPFAM" id="SSF50249">
    <property type="entry name" value="Nucleic acid-binding proteins"/>
    <property type="match status" value="1"/>
</dbReference>
<dbReference type="SUPFAM" id="SSF55666">
    <property type="entry name" value="Ribonuclease PH domain 2-like"/>
    <property type="match status" value="2"/>
</dbReference>
<dbReference type="SUPFAM" id="SSF54211">
    <property type="entry name" value="Ribosomal protein S5 domain 2-like"/>
    <property type="match status" value="2"/>
</dbReference>
<dbReference type="PROSITE" id="PS50084">
    <property type="entry name" value="KH_TYPE_1"/>
    <property type="match status" value="1"/>
</dbReference>
<dbReference type="PROSITE" id="PS50126">
    <property type="entry name" value="S1"/>
    <property type="match status" value="1"/>
</dbReference>
<organism>
    <name type="scientific">Anaplasma marginale (strain Florida)</name>
    <dbReference type="NCBI Taxonomy" id="320483"/>
    <lineage>
        <taxon>Bacteria</taxon>
        <taxon>Pseudomonadati</taxon>
        <taxon>Pseudomonadota</taxon>
        <taxon>Alphaproteobacteria</taxon>
        <taxon>Rickettsiales</taxon>
        <taxon>Anaplasmataceae</taxon>
        <taxon>Anaplasma</taxon>
    </lineage>
</organism>
<feature type="chain" id="PRO_0000381865" description="Polyribonucleotide nucleotidyltransferase">
    <location>
        <begin position="1"/>
        <end position="805"/>
    </location>
</feature>
<feature type="domain" description="KH" evidence="1">
    <location>
        <begin position="558"/>
        <end position="617"/>
    </location>
</feature>
<feature type="domain" description="S1 motif" evidence="1">
    <location>
        <begin position="627"/>
        <end position="694"/>
    </location>
</feature>
<feature type="region of interest" description="Disordered" evidence="2">
    <location>
        <begin position="702"/>
        <end position="805"/>
    </location>
</feature>
<feature type="binding site" evidence="1">
    <location>
        <position position="491"/>
    </location>
    <ligand>
        <name>Mg(2+)</name>
        <dbReference type="ChEBI" id="CHEBI:18420"/>
    </ligand>
</feature>
<feature type="binding site" evidence="1">
    <location>
        <position position="497"/>
    </location>
    <ligand>
        <name>Mg(2+)</name>
        <dbReference type="ChEBI" id="CHEBI:18420"/>
    </ligand>
</feature>
<protein>
    <recommendedName>
        <fullName evidence="1">Polyribonucleotide nucleotidyltransferase</fullName>
        <ecNumber evidence="1">2.7.7.8</ecNumber>
    </recommendedName>
    <alternativeName>
        <fullName evidence="1">Polynucleotide phosphorylase</fullName>
        <shortName evidence="1">PNPase</shortName>
    </alternativeName>
</protein>
<sequence>MFDITRKCVEWGDRLLVIESGKIARQADGAVVVDYGGTSVLSTVVSQKSKEPVDFLPLTVQFLAKSYAIGRIPGGFFKREGKPSDRETLISRLVDRSIRPLFPTGFCDEIVIVCNLLSYDQVSPPETVALIGAAAALAISGIPFPTPIAGAKIGYIREEERYILNPSAEELARSELDMFYSGTKSSVVMVESEASELSEEEMLGAVTFGHENCAQVLDLIEEFAEAAGPKDVVEFVPHDIGKVVSDISSGYSEKFSVAYSDHNKKPECSSLMPPGKACTQICAGKHVEESGEYTEQEVLLAIKTFERSLVRARVLDTLKRVDGRGFDQIRNIEIEVDLIPRSHGSALFTRGDTQALVITALGTPQDEQVVDGFDGDRRERFLLHYNFPSYAVGEAAALRPPGRREIGHGKLAWRAIHPVLPTKADFPYTIRVVSEITESDGSSSMATVCGASLALMDTGVPLKSSVAGIAMGLIKEGDRYAVLSDIIGDEDYLGDMDFKVAGTKDGITALQMDMKIRGIGFDIIEKSLQQAKDGRLFIIGKMDKVIKESREGVRDHVPRMESMIIDKNKIKNVIGTGGKNVREICEKTGVKIEISQDGTVMIYAVSRDAVEEAKNMIMCIVSEPEVGKVFSGVISEIAKYGAFVSFLGGRRGLVHISEIKNEHIGSVSDVLAVDDKVKVLVIGIDKDHVQLSMRRVDQDSGDLLEHESYSSNKKNGPQFGDASGGASGFRDYASGPARERRRSGGSGGRPVRRRSAGSSGSGSGGCYSVPQHVGTPDPVHGNDRRRGSGPQHASGGGGNKKPRFF</sequence>
<accession>B9KIE3</accession>